<proteinExistence type="inferred from homology"/>
<dbReference type="EC" id="3.1.13.-" evidence="1"/>
<dbReference type="EMBL" id="BA000037">
    <property type="protein sequence ID" value="BAC93946.1"/>
    <property type="molecule type" value="Genomic_DNA"/>
</dbReference>
<dbReference type="RefSeq" id="WP_011149902.1">
    <property type="nucleotide sequence ID" value="NC_005139.1"/>
</dbReference>
<dbReference type="SMR" id="Q7MM91"/>
<dbReference type="STRING" id="672.VV93_v1c11020"/>
<dbReference type="GeneID" id="93894311"/>
<dbReference type="KEGG" id="vvy:VV1182"/>
<dbReference type="eggNOG" id="COG0847">
    <property type="taxonomic scope" value="Bacteria"/>
</dbReference>
<dbReference type="HOGENOM" id="CLU_082724_0_0_6"/>
<dbReference type="Proteomes" id="UP000002675">
    <property type="component" value="Chromosome I"/>
</dbReference>
<dbReference type="GO" id="GO:0005829">
    <property type="term" value="C:cytosol"/>
    <property type="evidence" value="ECO:0007669"/>
    <property type="project" value="TreeGrafter"/>
</dbReference>
<dbReference type="GO" id="GO:0008408">
    <property type="term" value="F:3'-5' exonuclease activity"/>
    <property type="evidence" value="ECO:0007669"/>
    <property type="project" value="TreeGrafter"/>
</dbReference>
<dbReference type="GO" id="GO:0000287">
    <property type="term" value="F:magnesium ion binding"/>
    <property type="evidence" value="ECO:0007669"/>
    <property type="project" value="UniProtKB-UniRule"/>
</dbReference>
<dbReference type="GO" id="GO:0003676">
    <property type="term" value="F:nucleic acid binding"/>
    <property type="evidence" value="ECO:0007669"/>
    <property type="project" value="InterPro"/>
</dbReference>
<dbReference type="GO" id="GO:0016896">
    <property type="term" value="F:RNA exonuclease activity, producing 5'-phosphomonoesters"/>
    <property type="evidence" value="ECO:0007669"/>
    <property type="project" value="UniProtKB-UniRule"/>
</dbReference>
<dbReference type="GO" id="GO:0045004">
    <property type="term" value="P:DNA replication proofreading"/>
    <property type="evidence" value="ECO:0007669"/>
    <property type="project" value="TreeGrafter"/>
</dbReference>
<dbReference type="GO" id="GO:0008033">
    <property type="term" value="P:tRNA processing"/>
    <property type="evidence" value="ECO:0007669"/>
    <property type="project" value="UniProtKB-KW"/>
</dbReference>
<dbReference type="CDD" id="cd06134">
    <property type="entry name" value="RNaseT"/>
    <property type="match status" value="1"/>
</dbReference>
<dbReference type="FunFam" id="3.30.420.10:FF:000009">
    <property type="entry name" value="Ribonuclease T"/>
    <property type="match status" value="1"/>
</dbReference>
<dbReference type="Gene3D" id="3.30.420.10">
    <property type="entry name" value="Ribonuclease H-like superfamily/Ribonuclease H"/>
    <property type="match status" value="1"/>
</dbReference>
<dbReference type="HAMAP" id="MF_00157">
    <property type="entry name" value="RNase_T"/>
    <property type="match status" value="1"/>
</dbReference>
<dbReference type="InterPro" id="IPR013520">
    <property type="entry name" value="Exonuclease_RNaseT/DNA_pol3"/>
</dbReference>
<dbReference type="InterPro" id="IPR005987">
    <property type="entry name" value="RNase_T"/>
</dbReference>
<dbReference type="InterPro" id="IPR012337">
    <property type="entry name" value="RNaseH-like_sf"/>
</dbReference>
<dbReference type="InterPro" id="IPR036397">
    <property type="entry name" value="RNaseH_sf"/>
</dbReference>
<dbReference type="NCBIfam" id="TIGR01298">
    <property type="entry name" value="RNaseT"/>
    <property type="match status" value="1"/>
</dbReference>
<dbReference type="PANTHER" id="PTHR30231">
    <property type="entry name" value="DNA POLYMERASE III SUBUNIT EPSILON"/>
    <property type="match status" value="1"/>
</dbReference>
<dbReference type="PANTHER" id="PTHR30231:SF2">
    <property type="entry name" value="RIBONUCLEASE T"/>
    <property type="match status" value="1"/>
</dbReference>
<dbReference type="Pfam" id="PF00929">
    <property type="entry name" value="RNase_T"/>
    <property type="match status" value="1"/>
</dbReference>
<dbReference type="SMART" id="SM00479">
    <property type="entry name" value="EXOIII"/>
    <property type="match status" value="1"/>
</dbReference>
<dbReference type="SUPFAM" id="SSF53098">
    <property type="entry name" value="Ribonuclease H-like"/>
    <property type="match status" value="1"/>
</dbReference>
<reference key="1">
    <citation type="journal article" date="2003" name="Genome Res.">
        <title>Comparative genome analysis of Vibrio vulnificus, a marine pathogen.</title>
        <authorList>
            <person name="Chen C.-Y."/>
            <person name="Wu K.-M."/>
            <person name="Chang Y.-C."/>
            <person name="Chang C.-H."/>
            <person name="Tsai H.-C."/>
            <person name="Liao T.-L."/>
            <person name="Liu Y.-M."/>
            <person name="Chen H.-J."/>
            <person name="Shen A.B.-T."/>
            <person name="Li J.-C."/>
            <person name="Su T.-L."/>
            <person name="Shao C.-P."/>
            <person name="Lee C.-T."/>
            <person name="Hor L.-I."/>
            <person name="Tsai S.-F."/>
        </authorList>
    </citation>
    <scope>NUCLEOTIDE SEQUENCE [LARGE SCALE GENOMIC DNA]</scope>
    <source>
        <strain>YJ016</strain>
    </source>
</reference>
<protein>
    <recommendedName>
        <fullName evidence="1">Ribonuclease T</fullName>
        <ecNumber evidence="1">3.1.13.-</ecNumber>
    </recommendedName>
    <alternativeName>
        <fullName evidence="1">Exoribonuclease T</fullName>
        <shortName evidence="1">RNase T</shortName>
    </alternativeName>
</protein>
<comment type="function">
    <text evidence="1">Trims short 3' overhangs of a variety of RNA species, leaving a one or two nucleotide 3' overhang. Responsible for the end-turnover of tRNA: specifically removes the terminal AMP residue from uncharged tRNA (tRNA-C-C-A). Also appears to be involved in tRNA biosynthesis.</text>
</comment>
<comment type="cofactor">
    <cofactor evidence="1">
        <name>Mg(2+)</name>
        <dbReference type="ChEBI" id="CHEBI:18420"/>
    </cofactor>
    <text evidence="1">Binds two Mg(2+) per subunit. The active form of the enzyme binds two Mg(2+) ions in its active site. The first Mg(2+) forms only one salt bridge with the protein.</text>
</comment>
<comment type="subunit">
    <text evidence="1">Homodimer.</text>
</comment>
<comment type="similarity">
    <text evidence="1">Belongs to the RNase T family.</text>
</comment>
<accession>Q7MM91</accession>
<feature type="chain" id="PRO_0000208979" description="Ribonuclease T">
    <location>
        <begin position="1"/>
        <end position="217"/>
    </location>
</feature>
<feature type="domain" description="Exonuclease" evidence="1">
    <location>
        <begin position="20"/>
        <end position="195"/>
    </location>
</feature>
<feature type="active site" description="Proton donor/acceptor" evidence="1">
    <location>
        <position position="182"/>
    </location>
</feature>
<feature type="binding site" evidence="1">
    <location>
        <position position="23"/>
    </location>
    <ligand>
        <name>Mg(2+)</name>
        <dbReference type="ChEBI" id="CHEBI:18420"/>
        <label>1</label>
        <note>catalytic</note>
    </ligand>
</feature>
<feature type="binding site" evidence="1">
    <location>
        <position position="23"/>
    </location>
    <ligand>
        <name>Mg(2+)</name>
        <dbReference type="ChEBI" id="CHEBI:18420"/>
        <label>2</label>
        <note>catalytic</note>
    </ligand>
</feature>
<feature type="binding site" evidence="1">
    <location>
        <position position="25"/>
    </location>
    <ligand>
        <name>Mg(2+)</name>
        <dbReference type="ChEBI" id="CHEBI:18420"/>
        <label>2</label>
        <note>catalytic</note>
    </ligand>
</feature>
<feature type="binding site" evidence="1">
    <location>
        <position position="182"/>
    </location>
    <ligand>
        <name>Mg(2+)</name>
        <dbReference type="ChEBI" id="CHEBI:18420"/>
        <label>2</label>
        <note>catalytic</note>
    </ligand>
</feature>
<feature type="binding site" evidence="1">
    <location>
        <position position="187"/>
    </location>
    <ligand>
        <name>Mg(2+)</name>
        <dbReference type="ChEBI" id="CHEBI:18420"/>
        <label>2</label>
        <note>catalytic</note>
    </ligand>
</feature>
<feature type="site" description="Important for substrate binding and specificity" evidence="1">
    <location>
        <position position="29"/>
    </location>
</feature>
<feature type="site" description="Important for substrate binding and specificity" evidence="1">
    <location>
        <position position="77"/>
    </location>
</feature>
<feature type="site" description="Important for substrate binding and specificity" evidence="1">
    <location>
        <position position="125"/>
    </location>
</feature>
<feature type="site" description="Important for substrate binding and specificity" evidence="1">
    <location>
        <position position="147"/>
    </location>
</feature>
<organism>
    <name type="scientific">Vibrio vulnificus (strain YJ016)</name>
    <dbReference type="NCBI Taxonomy" id="196600"/>
    <lineage>
        <taxon>Bacteria</taxon>
        <taxon>Pseudomonadati</taxon>
        <taxon>Pseudomonadota</taxon>
        <taxon>Gammaproteobacteria</taxon>
        <taxon>Vibrionales</taxon>
        <taxon>Vibrionaceae</taxon>
        <taxon>Vibrio</taxon>
    </lineage>
</organism>
<evidence type="ECO:0000255" key="1">
    <source>
        <dbReference type="HAMAP-Rule" id="MF_00157"/>
    </source>
</evidence>
<keyword id="KW-0269">Exonuclease</keyword>
<keyword id="KW-0378">Hydrolase</keyword>
<keyword id="KW-0460">Magnesium</keyword>
<keyword id="KW-0479">Metal-binding</keyword>
<keyword id="KW-0540">Nuclease</keyword>
<keyword id="KW-0819">tRNA processing</keyword>
<name>RNT_VIBVY</name>
<sequence>MTVENTALTLKKRFRGYFPVVVDVETAGFNAQTDALLEICAVTLSMDENGDLHPASTIHFHVEPFEGANLEKEALEFNGIRDPFSPLRGAVTEQEALKEIYKLIRREQKAADCSRAIMVAHNAAFDLSFVNAANERCKLKRVPFHPFATFDTATLSGLAYGQTVLAKACKTAGMEFDNREAHSALYDTEKTAELFCGIVNKWKALGGWPLIEDENEK</sequence>
<gene>
    <name evidence="1" type="primary">rnt</name>
    <name type="ordered locus">VV1182</name>
</gene>